<sequence>MPRRPSSGRRVLKHQPLTFSPFMRLLSFASMARRDLSHPEDCQCSDEDISFDEKQKIPNLPRKGKEEQVSDSSDEEDSQEDVQADFEFFDPKPTDFHGVKILLQNYLDDKEWDLSSFVDCILEQTTVGTVVKVADDEDESVFALVTALNMARDKDNKCFRELKEFLRKVCSEKNIANNLEMLLEKKAQDVGLLVSQRVMNLPPQLLPPLYDGLFDEVSWAIEDEPTEKLRRSFRFKSYLLVTKIYKLKNPKQRKPRHGEEDIEDTVFLKPEDELFLELSSWSFTFPMRSQLVTSQEMKNYQLMGLVMAVEANKIPKFRQMLNSLID</sequence>
<proteinExistence type="evidence at protein level"/>
<gene>
    <name type="ordered locus">At2g44510</name>
    <name type="ORF">F4I1.32</name>
</gene>
<reference key="1">
    <citation type="journal article" date="1999" name="Nature">
        <title>Sequence and analysis of chromosome 2 of the plant Arabidopsis thaliana.</title>
        <authorList>
            <person name="Lin X."/>
            <person name="Kaul S."/>
            <person name="Rounsley S.D."/>
            <person name="Shea T.P."/>
            <person name="Benito M.-I."/>
            <person name="Town C.D."/>
            <person name="Fujii C.Y."/>
            <person name="Mason T.M."/>
            <person name="Bowman C.L."/>
            <person name="Barnstead M.E."/>
            <person name="Feldblyum T.V."/>
            <person name="Buell C.R."/>
            <person name="Ketchum K.A."/>
            <person name="Lee J.J."/>
            <person name="Ronning C.M."/>
            <person name="Koo H.L."/>
            <person name="Moffat K.S."/>
            <person name="Cronin L.A."/>
            <person name="Shen M."/>
            <person name="Pai G."/>
            <person name="Van Aken S."/>
            <person name="Umayam L."/>
            <person name="Tallon L.J."/>
            <person name="Gill J.E."/>
            <person name="Adams M.D."/>
            <person name="Carrera A.J."/>
            <person name="Creasy T.H."/>
            <person name="Goodman H.M."/>
            <person name="Somerville C.R."/>
            <person name="Copenhaver G.P."/>
            <person name="Preuss D."/>
            <person name="Nierman W.C."/>
            <person name="White O."/>
            <person name="Eisen J.A."/>
            <person name="Salzberg S.L."/>
            <person name="Fraser C.M."/>
            <person name="Venter J.C."/>
        </authorList>
    </citation>
    <scope>NUCLEOTIDE SEQUENCE [LARGE SCALE GENOMIC DNA]</scope>
    <source>
        <strain>cv. Columbia</strain>
    </source>
</reference>
<reference key="2">
    <citation type="journal article" date="2017" name="Plant J.">
        <title>Araport11: a complete reannotation of the Arabidopsis thaliana reference genome.</title>
        <authorList>
            <person name="Cheng C.Y."/>
            <person name="Krishnakumar V."/>
            <person name="Chan A.P."/>
            <person name="Thibaud-Nissen F."/>
            <person name="Schobel S."/>
            <person name="Town C.D."/>
        </authorList>
    </citation>
    <scope>GENOME REANNOTATION</scope>
    <source>
        <strain>cv. Columbia</strain>
    </source>
</reference>
<reference key="3">
    <citation type="journal article" date="2003" name="Science">
        <title>Empirical analysis of transcriptional activity in the Arabidopsis genome.</title>
        <authorList>
            <person name="Yamada K."/>
            <person name="Lim J."/>
            <person name="Dale J.M."/>
            <person name="Chen H."/>
            <person name="Shinn P."/>
            <person name="Palm C.J."/>
            <person name="Southwick A.M."/>
            <person name="Wu H.C."/>
            <person name="Kim C.J."/>
            <person name="Nguyen M."/>
            <person name="Pham P.K."/>
            <person name="Cheuk R.F."/>
            <person name="Karlin-Newmann G."/>
            <person name="Liu S.X."/>
            <person name="Lam B."/>
            <person name="Sakano H."/>
            <person name="Wu T."/>
            <person name="Yu G."/>
            <person name="Miranda M."/>
            <person name="Quach H.L."/>
            <person name="Tripp M."/>
            <person name="Chang C.H."/>
            <person name="Lee J.M."/>
            <person name="Toriumi M.J."/>
            <person name="Chan M.M."/>
            <person name="Tang C.C."/>
            <person name="Onodera C.S."/>
            <person name="Deng J.M."/>
            <person name="Akiyama K."/>
            <person name="Ansari Y."/>
            <person name="Arakawa T."/>
            <person name="Banh J."/>
            <person name="Banno F."/>
            <person name="Bowser L."/>
            <person name="Brooks S.Y."/>
            <person name="Carninci P."/>
            <person name="Chao Q."/>
            <person name="Choy N."/>
            <person name="Enju A."/>
            <person name="Goldsmith A.D."/>
            <person name="Gurjal M."/>
            <person name="Hansen N.F."/>
            <person name="Hayashizaki Y."/>
            <person name="Johnson-Hopson C."/>
            <person name="Hsuan V.W."/>
            <person name="Iida K."/>
            <person name="Karnes M."/>
            <person name="Khan S."/>
            <person name="Koesema E."/>
            <person name="Ishida J."/>
            <person name="Jiang P.X."/>
            <person name="Jones T."/>
            <person name="Kawai J."/>
            <person name="Kamiya A."/>
            <person name="Meyers C."/>
            <person name="Nakajima M."/>
            <person name="Narusaka M."/>
            <person name="Seki M."/>
            <person name="Sakurai T."/>
            <person name="Satou M."/>
            <person name="Tamse R."/>
            <person name="Vaysberg M."/>
            <person name="Wallender E.K."/>
            <person name="Wong C."/>
            <person name="Yamamura Y."/>
            <person name="Yuan S."/>
            <person name="Shinozaki K."/>
            <person name="Davis R.W."/>
            <person name="Theologis A."/>
            <person name="Ecker J.R."/>
        </authorList>
    </citation>
    <scope>NUCLEOTIDE SEQUENCE [LARGE SCALE MRNA]</scope>
    <source>
        <strain>cv. Columbia</strain>
    </source>
</reference>
<reference key="4">
    <citation type="journal article" date="2009" name="Plant Physiol.">
        <title>Large-scale Arabidopsis phosphoproteome profiling reveals novel chloroplast kinase substrates and phosphorylation networks.</title>
        <authorList>
            <person name="Reiland S."/>
            <person name="Messerli G."/>
            <person name="Baerenfaller K."/>
            <person name="Gerrits B."/>
            <person name="Endler A."/>
            <person name="Grossmann J."/>
            <person name="Gruissem W."/>
            <person name="Baginsky S."/>
        </authorList>
    </citation>
    <scope>PHOSPHORYLATION [LARGE SCALE ANALYSIS] AT SER-45</scope>
    <scope>IDENTIFICATION BY MASS SPECTROMETRY [LARGE SCALE ANALYSIS]</scope>
</reference>
<feature type="chain" id="PRO_0000249695" description="Protein BCCIP homolog">
    <location>
        <begin position="1"/>
        <end position="326"/>
    </location>
</feature>
<feature type="region of interest" description="Disordered" evidence="1">
    <location>
        <begin position="37"/>
        <end position="81"/>
    </location>
</feature>
<feature type="compositionally biased region" description="Acidic residues" evidence="1">
    <location>
        <begin position="72"/>
        <end position="81"/>
    </location>
</feature>
<feature type="modified residue" description="Phosphoserine" evidence="3">
    <location>
        <position position="45"/>
    </location>
</feature>
<keyword id="KW-0597">Phosphoprotein</keyword>
<keyword id="KW-1185">Reference proteome</keyword>
<evidence type="ECO:0000256" key="1">
    <source>
        <dbReference type="SAM" id="MobiDB-lite"/>
    </source>
</evidence>
<evidence type="ECO:0000305" key="2"/>
<evidence type="ECO:0007744" key="3">
    <source>
    </source>
</evidence>
<dbReference type="EMBL" id="AC004521">
    <property type="protein sequence ID" value="AAC16097.2"/>
    <property type="molecule type" value="Genomic_DNA"/>
</dbReference>
<dbReference type="EMBL" id="CP002685">
    <property type="protein sequence ID" value="AEC10431.1"/>
    <property type="molecule type" value="Genomic_DNA"/>
</dbReference>
<dbReference type="EMBL" id="AY045588">
    <property type="protein sequence ID" value="AAK73946.1"/>
    <property type="molecule type" value="mRNA"/>
</dbReference>
<dbReference type="EMBL" id="AY113055">
    <property type="protein sequence ID" value="AAM47363.1"/>
    <property type="molecule type" value="mRNA"/>
</dbReference>
<dbReference type="PIR" id="T02406">
    <property type="entry name" value="T02406"/>
</dbReference>
<dbReference type="RefSeq" id="NP_566018.1">
    <property type="nucleotide sequence ID" value="NM_130014.4"/>
</dbReference>
<dbReference type="SMR" id="O64885"/>
<dbReference type="FunCoup" id="O64885">
    <property type="interactions" value="3805"/>
</dbReference>
<dbReference type="STRING" id="3702.O64885"/>
<dbReference type="iPTMnet" id="O64885"/>
<dbReference type="PaxDb" id="3702-AT2G44510.1"/>
<dbReference type="ProteomicsDB" id="240720"/>
<dbReference type="EnsemblPlants" id="AT2G44510.1">
    <property type="protein sequence ID" value="AT2G44510.1"/>
    <property type="gene ID" value="AT2G44510"/>
</dbReference>
<dbReference type="GeneID" id="819058"/>
<dbReference type="Gramene" id="AT2G44510.1">
    <property type="protein sequence ID" value="AT2G44510.1"/>
    <property type="gene ID" value="AT2G44510"/>
</dbReference>
<dbReference type="KEGG" id="ath:AT2G44510"/>
<dbReference type="Araport" id="AT2G44510"/>
<dbReference type="TAIR" id="AT2G44510"/>
<dbReference type="eggNOG" id="KOG3034">
    <property type="taxonomic scope" value="Eukaryota"/>
</dbReference>
<dbReference type="HOGENOM" id="CLU_068770_0_0_1"/>
<dbReference type="InParanoid" id="O64885"/>
<dbReference type="OMA" id="VKFYRKE"/>
<dbReference type="OrthoDB" id="27543at2759"/>
<dbReference type="PhylomeDB" id="O64885"/>
<dbReference type="CD-CODE" id="4299E36E">
    <property type="entry name" value="Nucleolus"/>
</dbReference>
<dbReference type="PRO" id="PR:O64885"/>
<dbReference type="Proteomes" id="UP000006548">
    <property type="component" value="Chromosome 2"/>
</dbReference>
<dbReference type="ExpressionAtlas" id="O64885">
    <property type="expression patterns" value="baseline and differential"/>
</dbReference>
<dbReference type="GO" id="GO:0005730">
    <property type="term" value="C:nucleolus"/>
    <property type="evidence" value="ECO:0007005"/>
    <property type="project" value="TAIR"/>
</dbReference>
<dbReference type="InterPro" id="IPR025602">
    <property type="entry name" value="BCP1_family"/>
</dbReference>
<dbReference type="PANTHER" id="PTHR13261">
    <property type="entry name" value="BRCA2 AND CDKN1A INTERACTING PROTEIN"/>
    <property type="match status" value="1"/>
</dbReference>
<dbReference type="PANTHER" id="PTHR13261:SF0">
    <property type="entry name" value="BRCA2 AND CDKN1A-INTERACTING PROTEIN"/>
    <property type="match status" value="1"/>
</dbReference>
<dbReference type="Pfam" id="PF13862">
    <property type="entry name" value="BCCIP"/>
    <property type="match status" value="1"/>
</dbReference>
<dbReference type="PIRSF" id="PIRSF028983">
    <property type="entry name" value="BCP1"/>
    <property type="match status" value="1"/>
</dbReference>
<name>BCCIP_ARATH</name>
<protein>
    <recommendedName>
        <fullName>Protein BCCIP homolog</fullName>
    </recommendedName>
</protein>
<organism>
    <name type="scientific">Arabidopsis thaliana</name>
    <name type="common">Mouse-ear cress</name>
    <dbReference type="NCBI Taxonomy" id="3702"/>
    <lineage>
        <taxon>Eukaryota</taxon>
        <taxon>Viridiplantae</taxon>
        <taxon>Streptophyta</taxon>
        <taxon>Embryophyta</taxon>
        <taxon>Tracheophyta</taxon>
        <taxon>Spermatophyta</taxon>
        <taxon>Magnoliopsida</taxon>
        <taxon>eudicotyledons</taxon>
        <taxon>Gunneridae</taxon>
        <taxon>Pentapetalae</taxon>
        <taxon>rosids</taxon>
        <taxon>malvids</taxon>
        <taxon>Brassicales</taxon>
        <taxon>Brassicaceae</taxon>
        <taxon>Camelineae</taxon>
        <taxon>Arabidopsis</taxon>
    </lineage>
</organism>
<comment type="similarity">
    <text evidence="2">Belongs to the BCP1 family.</text>
</comment>
<accession>O64885</accession>
<accession>Q94AZ3</accession>